<organism>
    <name type="scientific">Buchnera aphidicola subsp. Baizongia pistaciae (strain Bp)</name>
    <dbReference type="NCBI Taxonomy" id="224915"/>
    <lineage>
        <taxon>Bacteria</taxon>
        <taxon>Pseudomonadati</taxon>
        <taxon>Pseudomonadota</taxon>
        <taxon>Gammaproteobacteria</taxon>
        <taxon>Enterobacterales</taxon>
        <taxon>Erwiniaceae</taxon>
        <taxon>Buchnera</taxon>
    </lineage>
</organism>
<name>PNP_BUCBP</name>
<protein>
    <recommendedName>
        <fullName evidence="1">Polyribonucleotide nucleotidyltransferase</fullName>
        <ecNumber evidence="1">2.7.7.8</ecNumber>
    </recommendedName>
    <alternativeName>
        <fullName evidence="1">Polynucleotide phosphorylase</fullName>
        <shortName evidence="1">PNPase</shortName>
    </alternativeName>
</protein>
<gene>
    <name evidence="1" type="primary">pnp</name>
    <name type="ordered locus">bbp_336</name>
</gene>
<sequence>MLNPIVRKFQYGQHIVTLETGIMARQATAAVLTSMDDTTVFVTVVGQKKLQTEQKFFPMTVNYQERTYAAGRIPGGFFRREGRPSENEILIARLIDRPIRPLFPKRFFNEVQIIATVVSLNPQVNPDIVAIIGASAALSISGMPFLGPIGAARIGYINNQYILNPNVNEIKSSSLDLIISGTEESVLMVEAEANMLTEEQIINAINYGHEQQKIVIKNIEHFAKKVKIPVWEQCLYPVNDDLEKRIIEISEQEIVKAYNIFDKVIRLDVLDKIKSKAIEIIISEYSGIDEFEITSIISNIERKIVRNRVLKNRIRIDGRNKDEIRTLDVRTGVLPRVHGSALFTRGETQSLVSVTLGTSRDAQNLDELLGDKTDNFLFHYNFPPYAVGEIGMVGSPKRREIGHGKLAKRSILAVMPKLDLFPYTIRIVSEITESNGSSSMASVCGASLALMDAGVPISNAIAGIAMGLIKEGDDFVVLTDILGDEDHLGDMDFKISGSKKGITALQMDIKVKGITNEIMKLALYQAKNARIHILNIMKKSLNVPRKDISIFAPRIHTIKINPEKIKDVIGKGGSVIRMLTEETGTTIEIEDDGTVKISAVMQEKAKCAIQRIKEITAEVEVGSVYTGKVTRIVDFGAFVSIGIGKEGLVHISQIAHKRVDKVSDHLRLHQEIFVKVLEVDRQGRLRLSIKGAK</sequence>
<accession>Q89AF8</accession>
<proteinExistence type="inferred from homology"/>
<feature type="chain" id="PRO_0000197912" description="Polyribonucleotide nucleotidyltransferase">
    <location>
        <begin position="1"/>
        <end position="693"/>
    </location>
</feature>
<feature type="domain" description="KH" evidence="1">
    <location>
        <begin position="553"/>
        <end position="612"/>
    </location>
</feature>
<feature type="domain" description="S1 motif" evidence="1">
    <location>
        <begin position="622"/>
        <end position="690"/>
    </location>
</feature>
<feature type="binding site" evidence="1">
    <location>
        <position position="486"/>
    </location>
    <ligand>
        <name>Mg(2+)</name>
        <dbReference type="ChEBI" id="CHEBI:18420"/>
    </ligand>
</feature>
<feature type="binding site" evidence="1">
    <location>
        <position position="492"/>
    </location>
    <ligand>
        <name>Mg(2+)</name>
        <dbReference type="ChEBI" id="CHEBI:18420"/>
    </ligand>
</feature>
<keyword id="KW-0963">Cytoplasm</keyword>
<keyword id="KW-0460">Magnesium</keyword>
<keyword id="KW-0479">Metal-binding</keyword>
<keyword id="KW-0548">Nucleotidyltransferase</keyword>
<keyword id="KW-1185">Reference proteome</keyword>
<keyword id="KW-0694">RNA-binding</keyword>
<keyword id="KW-0808">Transferase</keyword>
<comment type="function">
    <text evidence="1">Involved in mRNA degradation. Catalyzes the phosphorolysis of single-stranded polyribonucleotides processively in the 3'- to 5'-direction.</text>
</comment>
<comment type="catalytic activity">
    <reaction evidence="1">
        <text>RNA(n+1) + phosphate = RNA(n) + a ribonucleoside 5'-diphosphate</text>
        <dbReference type="Rhea" id="RHEA:22096"/>
        <dbReference type="Rhea" id="RHEA-COMP:14527"/>
        <dbReference type="Rhea" id="RHEA-COMP:17342"/>
        <dbReference type="ChEBI" id="CHEBI:43474"/>
        <dbReference type="ChEBI" id="CHEBI:57930"/>
        <dbReference type="ChEBI" id="CHEBI:140395"/>
        <dbReference type="EC" id="2.7.7.8"/>
    </reaction>
</comment>
<comment type="cofactor">
    <cofactor evidence="1">
        <name>Mg(2+)</name>
        <dbReference type="ChEBI" id="CHEBI:18420"/>
    </cofactor>
</comment>
<comment type="subunit">
    <text evidence="1">Component of the RNA degradosome, which is a multiprotein complex involved in RNA processing and mRNA degradation.</text>
</comment>
<comment type="subcellular location">
    <subcellularLocation>
        <location evidence="1">Cytoplasm</location>
    </subcellularLocation>
</comment>
<comment type="similarity">
    <text evidence="1">Belongs to the polyribonucleotide nucleotidyltransferase family.</text>
</comment>
<reference key="1">
    <citation type="journal article" date="2003" name="Proc. Natl. Acad. Sci. U.S.A.">
        <title>Reductive genome evolution in Buchnera aphidicola.</title>
        <authorList>
            <person name="van Ham R.C.H.J."/>
            <person name="Kamerbeek J."/>
            <person name="Palacios C."/>
            <person name="Rausell C."/>
            <person name="Abascal F."/>
            <person name="Bastolla U."/>
            <person name="Fernandez J.M."/>
            <person name="Jimenez L."/>
            <person name="Postigo M."/>
            <person name="Silva F.J."/>
            <person name="Tamames J."/>
            <person name="Viguera E."/>
            <person name="Latorre A."/>
            <person name="Valencia A."/>
            <person name="Moran F."/>
            <person name="Moya A."/>
        </authorList>
    </citation>
    <scope>NUCLEOTIDE SEQUENCE [LARGE SCALE GENOMIC DNA]</scope>
    <source>
        <strain>Bp</strain>
    </source>
</reference>
<evidence type="ECO:0000255" key="1">
    <source>
        <dbReference type="HAMAP-Rule" id="MF_01595"/>
    </source>
</evidence>
<dbReference type="EC" id="2.7.7.8" evidence="1"/>
<dbReference type="EMBL" id="AE016826">
    <property type="protein sequence ID" value="AAO27057.1"/>
    <property type="molecule type" value="Genomic_DNA"/>
</dbReference>
<dbReference type="RefSeq" id="WP_011091458.1">
    <property type="nucleotide sequence ID" value="NC_004545.1"/>
</dbReference>
<dbReference type="SMR" id="Q89AF8"/>
<dbReference type="STRING" id="224915.bbp_336"/>
<dbReference type="KEGG" id="bab:bbp_336"/>
<dbReference type="eggNOG" id="COG1185">
    <property type="taxonomic scope" value="Bacteria"/>
</dbReference>
<dbReference type="HOGENOM" id="CLU_004217_2_2_6"/>
<dbReference type="OrthoDB" id="9804305at2"/>
<dbReference type="Proteomes" id="UP000000601">
    <property type="component" value="Chromosome"/>
</dbReference>
<dbReference type="GO" id="GO:0005829">
    <property type="term" value="C:cytosol"/>
    <property type="evidence" value="ECO:0007669"/>
    <property type="project" value="TreeGrafter"/>
</dbReference>
<dbReference type="GO" id="GO:0000175">
    <property type="term" value="F:3'-5'-RNA exonuclease activity"/>
    <property type="evidence" value="ECO:0007669"/>
    <property type="project" value="TreeGrafter"/>
</dbReference>
<dbReference type="GO" id="GO:0000287">
    <property type="term" value="F:magnesium ion binding"/>
    <property type="evidence" value="ECO:0007669"/>
    <property type="project" value="UniProtKB-UniRule"/>
</dbReference>
<dbReference type="GO" id="GO:0004654">
    <property type="term" value="F:polyribonucleotide nucleotidyltransferase activity"/>
    <property type="evidence" value="ECO:0007669"/>
    <property type="project" value="UniProtKB-UniRule"/>
</dbReference>
<dbReference type="GO" id="GO:0003723">
    <property type="term" value="F:RNA binding"/>
    <property type="evidence" value="ECO:0007669"/>
    <property type="project" value="UniProtKB-UniRule"/>
</dbReference>
<dbReference type="GO" id="GO:0006402">
    <property type="term" value="P:mRNA catabolic process"/>
    <property type="evidence" value="ECO:0007669"/>
    <property type="project" value="UniProtKB-UniRule"/>
</dbReference>
<dbReference type="GO" id="GO:0006396">
    <property type="term" value="P:RNA processing"/>
    <property type="evidence" value="ECO:0007669"/>
    <property type="project" value="InterPro"/>
</dbReference>
<dbReference type="CDD" id="cd02393">
    <property type="entry name" value="KH-I_PNPase"/>
    <property type="match status" value="1"/>
</dbReference>
<dbReference type="CDD" id="cd11363">
    <property type="entry name" value="RNase_PH_PNPase_1"/>
    <property type="match status" value="1"/>
</dbReference>
<dbReference type="CDD" id="cd11364">
    <property type="entry name" value="RNase_PH_PNPase_2"/>
    <property type="match status" value="1"/>
</dbReference>
<dbReference type="CDD" id="cd04472">
    <property type="entry name" value="S1_PNPase"/>
    <property type="match status" value="1"/>
</dbReference>
<dbReference type="FunFam" id="2.40.50.140:FF:000023">
    <property type="entry name" value="Polyribonucleotide nucleotidyltransferase"/>
    <property type="match status" value="1"/>
</dbReference>
<dbReference type="FunFam" id="3.30.1370.10:FF:000001">
    <property type="entry name" value="Polyribonucleotide nucleotidyltransferase"/>
    <property type="match status" value="1"/>
</dbReference>
<dbReference type="FunFam" id="3.30.230.70:FF:000001">
    <property type="entry name" value="Polyribonucleotide nucleotidyltransferase"/>
    <property type="match status" value="1"/>
</dbReference>
<dbReference type="FunFam" id="3.30.230.70:FF:000002">
    <property type="entry name" value="Polyribonucleotide nucleotidyltransferase"/>
    <property type="match status" value="1"/>
</dbReference>
<dbReference type="Gene3D" id="3.30.230.70">
    <property type="entry name" value="GHMP Kinase, N-terminal domain"/>
    <property type="match status" value="2"/>
</dbReference>
<dbReference type="Gene3D" id="3.30.1370.10">
    <property type="entry name" value="K Homology domain, type 1"/>
    <property type="match status" value="1"/>
</dbReference>
<dbReference type="Gene3D" id="2.40.50.140">
    <property type="entry name" value="Nucleic acid-binding proteins"/>
    <property type="match status" value="1"/>
</dbReference>
<dbReference type="HAMAP" id="MF_01595">
    <property type="entry name" value="PNPase"/>
    <property type="match status" value="1"/>
</dbReference>
<dbReference type="InterPro" id="IPR001247">
    <property type="entry name" value="ExoRNase_PH_dom1"/>
</dbReference>
<dbReference type="InterPro" id="IPR015847">
    <property type="entry name" value="ExoRNase_PH_dom2"/>
</dbReference>
<dbReference type="InterPro" id="IPR036345">
    <property type="entry name" value="ExoRNase_PH_dom2_sf"/>
</dbReference>
<dbReference type="InterPro" id="IPR004087">
    <property type="entry name" value="KH_dom"/>
</dbReference>
<dbReference type="InterPro" id="IPR004088">
    <property type="entry name" value="KH_dom_type_1"/>
</dbReference>
<dbReference type="InterPro" id="IPR036612">
    <property type="entry name" value="KH_dom_type_1_sf"/>
</dbReference>
<dbReference type="InterPro" id="IPR012340">
    <property type="entry name" value="NA-bd_OB-fold"/>
</dbReference>
<dbReference type="InterPro" id="IPR012162">
    <property type="entry name" value="PNPase"/>
</dbReference>
<dbReference type="InterPro" id="IPR027408">
    <property type="entry name" value="PNPase/RNase_PH_dom_sf"/>
</dbReference>
<dbReference type="InterPro" id="IPR015848">
    <property type="entry name" value="PNPase_PH_RNA-bd_bac/org-type"/>
</dbReference>
<dbReference type="InterPro" id="IPR036456">
    <property type="entry name" value="PNPase_PH_RNA-bd_sf"/>
</dbReference>
<dbReference type="InterPro" id="IPR020568">
    <property type="entry name" value="Ribosomal_Su5_D2-typ_SF"/>
</dbReference>
<dbReference type="InterPro" id="IPR003029">
    <property type="entry name" value="S1_domain"/>
</dbReference>
<dbReference type="NCBIfam" id="TIGR03591">
    <property type="entry name" value="polynuc_phos"/>
    <property type="match status" value="1"/>
</dbReference>
<dbReference type="NCBIfam" id="NF008805">
    <property type="entry name" value="PRK11824.1"/>
    <property type="match status" value="1"/>
</dbReference>
<dbReference type="PANTHER" id="PTHR11252">
    <property type="entry name" value="POLYRIBONUCLEOTIDE NUCLEOTIDYLTRANSFERASE"/>
    <property type="match status" value="1"/>
</dbReference>
<dbReference type="PANTHER" id="PTHR11252:SF0">
    <property type="entry name" value="POLYRIBONUCLEOTIDE NUCLEOTIDYLTRANSFERASE 1, MITOCHONDRIAL"/>
    <property type="match status" value="1"/>
</dbReference>
<dbReference type="Pfam" id="PF00013">
    <property type="entry name" value="KH_1"/>
    <property type="match status" value="1"/>
</dbReference>
<dbReference type="Pfam" id="PF03726">
    <property type="entry name" value="PNPase"/>
    <property type="match status" value="1"/>
</dbReference>
<dbReference type="Pfam" id="PF01138">
    <property type="entry name" value="RNase_PH"/>
    <property type="match status" value="2"/>
</dbReference>
<dbReference type="Pfam" id="PF03725">
    <property type="entry name" value="RNase_PH_C"/>
    <property type="match status" value="1"/>
</dbReference>
<dbReference type="Pfam" id="PF00575">
    <property type="entry name" value="S1"/>
    <property type="match status" value="1"/>
</dbReference>
<dbReference type="PIRSF" id="PIRSF005499">
    <property type="entry name" value="PNPase"/>
    <property type="match status" value="1"/>
</dbReference>
<dbReference type="SMART" id="SM00322">
    <property type="entry name" value="KH"/>
    <property type="match status" value="1"/>
</dbReference>
<dbReference type="SMART" id="SM00316">
    <property type="entry name" value="S1"/>
    <property type="match status" value="1"/>
</dbReference>
<dbReference type="SUPFAM" id="SSF54791">
    <property type="entry name" value="Eukaryotic type KH-domain (KH-domain type I)"/>
    <property type="match status" value="1"/>
</dbReference>
<dbReference type="SUPFAM" id="SSF50249">
    <property type="entry name" value="Nucleic acid-binding proteins"/>
    <property type="match status" value="1"/>
</dbReference>
<dbReference type="SUPFAM" id="SSF46915">
    <property type="entry name" value="Polynucleotide phosphorylase/guanosine pentaphosphate synthase (PNPase/GPSI), domain 3"/>
    <property type="match status" value="1"/>
</dbReference>
<dbReference type="SUPFAM" id="SSF55666">
    <property type="entry name" value="Ribonuclease PH domain 2-like"/>
    <property type="match status" value="2"/>
</dbReference>
<dbReference type="SUPFAM" id="SSF54211">
    <property type="entry name" value="Ribosomal protein S5 domain 2-like"/>
    <property type="match status" value="2"/>
</dbReference>
<dbReference type="PROSITE" id="PS50084">
    <property type="entry name" value="KH_TYPE_1"/>
    <property type="match status" value="1"/>
</dbReference>
<dbReference type="PROSITE" id="PS50126">
    <property type="entry name" value="S1"/>
    <property type="match status" value="1"/>
</dbReference>